<gene>
    <name evidence="1" type="primary">rplL</name>
</gene>
<comment type="function">
    <text evidence="1">Forms part of the ribosomal stalk which helps the ribosome interact with GTP-bound translation factors. Is thus essential for accurate translation.</text>
</comment>
<comment type="subunit">
    <text evidence="1">Homodimer. Part of the ribosomal stalk of the 50S ribosomal subunit. Forms a multimeric L10(L12)X complex, where L10 forms an elongated spine to which 2 to 4 L12 dimers bind in a sequential fashion. Binds GTP-bound translation factors.</text>
</comment>
<comment type="similarity">
    <text evidence="1">Belongs to the bacterial ribosomal protein bL12 family.</text>
</comment>
<proteinExistence type="inferred from homology"/>
<protein>
    <recommendedName>
        <fullName evidence="1">Large ribosomal subunit protein bL12</fullName>
    </recommendedName>
    <alternativeName>
        <fullName evidence="2">50S ribosomal protein L7/L12</fullName>
    </alternativeName>
</protein>
<dbReference type="EMBL" id="AF312973">
    <property type="protein sequence ID" value="AAG34165.1"/>
    <property type="molecule type" value="Genomic_DNA"/>
</dbReference>
<dbReference type="RefSeq" id="WP_003677916.1">
    <property type="nucleotide sequence ID" value="NZ_PKJP01000014.1"/>
</dbReference>
<dbReference type="SMR" id="Q9F5M1"/>
<dbReference type="GeneID" id="86930552"/>
<dbReference type="GO" id="GO:0022625">
    <property type="term" value="C:cytosolic large ribosomal subunit"/>
    <property type="evidence" value="ECO:0007669"/>
    <property type="project" value="TreeGrafter"/>
</dbReference>
<dbReference type="GO" id="GO:0003729">
    <property type="term" value="F:mRNA binding"/>
    <property type="evidence" value="ECO:0007669"/>
    <property type="project" value="TreeGrafter"/>
</dbReference>
<dbReference type="GO" id="GO:0003735">
    <property type="term" value="F:structural constituent of ribosome"/>
    <property type="evidence" value="ECO:0007669"/>
    <property type="project" value="InterPro"/>
</dbReference>
<dbReference type="GO" id="GO:0006412">
    <property type="term" value="P:translation"/>
    <property type="evidence" value="ECO:0007669"/>
    <property type="project" value="UniProtKB-UniRule"/>
</dbReference>
<dbReference type="CDD" id="cd00387">
    <property type="entry name" value="Ribosomal_L7_L12"/>
    <property type="match status" value="1"/>
</dbReference>
<dbReference type="FunFam" id="1.20.5.710:FF:000003">
    <property type="entry name" value="50S ribosomal protein L7/L12"/>
    <property type="match status" value="1"/>
</dbReference>
<dbReference type="FunFam" id="3.30.1390.10:FF:000001">
    <property type="entry name" value="50S ribosomal protein L7/L12"/>
    <property type="match status" value="1"/>
</dbReference>
<dbReference type="Gene3D" id="3.30.1390.10">
    <property type="match status" value="1"/>
</dbReference>
<dbReference type="Gene3D" id="1.20.5.710">
    <property type="entry name" value="Single helix bin"/>
    <property type="match status" value="1"/>
</dbReference>
<dbReference type="HAMAP" id="MF_00368">
    <property type="entry name" value="Ribosomal_bL12"/>
    <property type="match status" value="1"/>
</dbReference>
<dbReference type="InterPro" id="IPR000206">
    <property type="entry name" value="Ribosomal_bL12"/>
</dbReference>
<dbReference type="InterPro" id="IPR013823">
    <property type="entry name" value="Ribosomal_bL12_C"/>
</dbReference>
<dbReference type="InterPro" id="IPR014719">
    <property type="entry name" value="Ribosomal_bL12_C/ClpS-like"/>
</dbReference>
<dbReference type="InterPro" id="IPR008932">
    <property type="entry name" value="Ribosomal_bL12_oligo"/>
</dbReference>
<dbReference type="InterPro" id="IPR036235">
    <property type="entry name" value="Ribosomal_bL12_oligo_N_sf"/>
</dbReference>
<dbReference type="NCBIfam" id="TIGR00855">
    <property type="entry name" value="L12"/>
    <property type="match status" value="1"/>
</dbReference>
<dbReference type="PANTHER" id="PTHR45987">
    <property type="entry name" value="39S RIBOSOMAL PROTEIN L12"/>
    <property type="match status" value="1"/>
</dbReference>
<dbReference type="PANTHER" id="PTHR45987:SF4">
    <property type="entry name" value="LARGE RIBOSOMAL SUBUNIT PROTEIN BL12M"/>
    <property type="match status" value="1"/>
</dbReference>
<dbReference type="Pfam" id="PF00542">
    <property type="entry name" value="Ribosomal_L12"/>
    <property type="match status" value="1"/>
</dbReference>
<dbReference type="Pfam" id="PF16320">
    <property type="entry name" value="Ribosomal_L12_N"/>
    <property type="match status" value="1"/>
</dbReference>
<dbReference type="SUPFAM" id="SSF54736">
    <property type="entry name" value="ClpS-like"/>
    <property type="match status" value="1"/>
</dbReference>
<dbReference type="SUPFAM" id="SSF48300">
    <property type="entry name" value="Ribosomal protein L7/12, oligomerisation (N-terminal) domain"/>
    <property type="match status" value="1"/>
</dbReference>
<accession>Q9F5M1</accession>
<organism>
    <name type="scientific">Neisseria perflava</name>
    <dbReference type="NCBI Taxonomy" id="33053"/>
    <lineage>
        <taxon>Bacteria</taxon>
        <taxon>Pseudomonadati</taxon>
        <taxon>Pseudomonadota</taxon>
        <taxon>Betaproteobacteria</taxon>
        <taxon>Neisseriales</taxon>
        <taxon>Neisseriaceae</taxon>
        <taxon>Neisseria</taxon>
    </lineage>
</organism>
<evidence type="ECO:0000255" key="1">
    <source>
        <dbReference type="HAMAP-Rule" id="MF_00368"/>
    </source>
</evidence>
<evidence type="ECO:0000305" key="2"/>
<feature type="chain" id="PRO_0000157558" description="Large ribosomal subunit protein bL12">
    <location>
        <begin position="1"/>
        <end position="123"/>
    </location>
</feature>
<reference key="1">
    <citation type="submission" date="2000-10" db="EMBL/GenBank/DDBJ databases">
        <title>Alterations in protein profiles associated with induction of the contact-induced enhanced invasion phenotype of Neisseria gonorrhoeae.</title>
        <authorList>
            <person name="Spence J.M."/>
            <person name="Clark V.L."/>
        </authorList>
    </citation>
    <scope>NUCLEOTIDE SEQUENCE [GENOMIC DNA]</scope>
    <source>
        <strain>ATCC 10555 / DSM 18009 / CIP 73.11 / CCUG 17915 / LMG 5284 / NRL 30015 / NRRL B-1790</strain>
    </source>
</reference>
<name>RL7_NEIPE</name>
<sequence length="123" mass="12578">MAITKEDILEAVGSLTVMELNDLVKAFEEKFGVSAAAVAVAGPAGAGAAAAEEKTEFDVVLASAGDQKVGVIKVVRAITGLGLKEAKDIVDGAPKTLKEGVSKAEAEDIQKQLEEAGAKVEIK</sequence>
<keyword id="KW-0687">Ribonucleoprotein</keyword>
<keyword id="KW-0689">Ribosomal protein</keyword>